<dbReference type="EC" id="2.4.99.28" evidence="1"/>
<dbReference type="EMBL" id="CP000800">
    <property type="protein sequence ID" value="ABV20328.1"/>
    <property type="molecule type" value="Genomic_DNA"/>
</dbReference>
<dbReference type="RefSeq" id="WP_000047091.1">
    <property type="nucleotide sequence ID" value="NC_009801.1"/>
</dbReference>
<dbReference type="SMR" id="A7ZSA7"/>
<dbReference type="CAZy" id="GT51">
    <property type="family name" value="Glycosyltransferase Family 51"/>
</dbReference>
<dbReference type="GeneID" id="75206064"/>
<dbReference type="KEGG" id="ecw:EcE24377A_3695"/>
<dbReference type="HOGENOM" id="CLU_006354_1_1_6"/>
<dbReference type="UniPathway" id="UPA00219"/>
<dbReference type="Proteomes" id="UP000001122">
    <property type="component" value="Chromosome"/>
</dbReference>
<dbReference type="GO" id="GO:0009274">
    <property type="term" value="C:peptidoglycan-based cell wall"/>
    <property type="evidence" value="ECO:0007669"/>
    <property type="project" value="InterPro"/>
</dbReference>
<dbReference type="GO" id="GO:0005886">
    <property type="term" value="C:plasma membrane"/>
    <property type="evidence" value="ECO:0007669"/>
    <property type="project" value="UniProtKB-SubCell"/>
</dbReference>
<dbReference type="GO" id="GO:0016763">
    <property type="term" value="F:pentosyltransferase activity"/>
    <property type="evidence" value="ECO:0007669"/>
    <property type="project" value="InterPro"/>
</dbReference>
<dbReference type="GO" id="GO:0008955">
    <property type="term" value="F:peptidoglycan glycosyltransferase activity"/>
    <property type="evidence" value="ECO:0007669"/>
    <property type="project" value="UniProtKB-UniRule"/>
</dbReference>
<dbReference type="GO" id="GO:0071555">
    <property type="term" value="P:cell wall organization"/>
    <property type="evidence" value="ECO:0007669"/>
    <property type="project" value="UniProtKB-KW"/>
</dbReference>
<dbReference type="GO" id="GO:0009252">
    <property type="term" value="P:peptidoglycan biosynthetic process"/>
    <property type="evidence" value="ECO:0007669"/>
    <property type="project" value="UniProtKB-UniRule"/>
</dbReference>
<dbReference type="GO" id="GO:0008360">
    <property type="term" value="P:regulation of cell shape"/>
    <property type="evidence" value="ECO:0007669"/>
    <property type="project" value="UniProtKB-KW"/>
</dbReference>
<dbReference type="FunFam" id="1.10.3810.10:FF:000004">
    <property type="entry name" value="Biosynthetic peptidoglycan transglycosylase"/>
    <property type="match status" value="1"/>
</dbReference>
<dbReference type="Gene3D" id="1.10.3810.10">
    <property type="entry name" value="Biosynthetic peptidoglycan transglycosylase-like"/>
    <property type="match status" value="1"/>
</dbReference>
<dbReference type="HAMAP" id="MF_00766">
    <property type="entry name" value="PGT_MtgA"/>
    <property type="match status" value="1"/>
</dbReference>
<dbReference type="InterPro" id="IPR001264">
    <property type="entry name" value="Glyco_trans_51"/>
</dbReference>
<dbReference type="InterPro" id="IPR023346">
    <property type="entry name" value="Lysozyme-like_dom_sf"/>
</dbReference>
<dbReference type="InterPro" id="IPR036950">
    <property type="entry name" value="PBP_transglycosylase"/>
</dbReference>
<dbReference type="InterPro" id="IPR011812">
    <property type="entry name" value="Pep_trsgly"/>
</dbReference>
<dbReference type="NCBIfam" id="TIGR02070">
    <property type="entry name" value="mono_pep_trsgly"/>
    <property type="match status" value="1"/>
</dbReference>
<dbReference type="PANTHER" id="PTHR30400:SF0">
    <property type="entry name" value="BIOSYNTHETIC PEPTIDOGLYCAN TRANSGLYCOSYLASE"/>
    <property type="match status" value="1"/>
</dbReference>
<dbReference type="PANTHER" id="PTHR30400">
    <property type="entry name" value="MONOFUNCTIONAL BIOSYNTHETIC PEPTIDOGLYCAN TRANSGLYCOSYLASE"/>
    <property type="match status" value="1"/>
</dbReference>
<dbReference type="Pfam" id="PF00912">
    <property type="entry name" value="Transgly"/>
    <property type="match status" value="1"/>
</dbReference>
<dbReference type="SUPFAM" id="SSF53955">
    <property type="entry name" value="Lysozyme-like"/>
    <property type="match status" value="1"/>
</dbReference>
<keyword id="KW-0997">Cell inner membrane</keyword>
<keyword id="KW-1003">Cell membrane</keyword>
<keyword id="KW-0133">Cell shape</keyword>
<keyword id="KW-0961">Cell wall biogenesis/degradation</keyword>
<keyword id="KW-0328">Glycosyltransferase</keyword>
<keyword id="KW-0472">Membrane</keyword>
<keyword id="KW-0573">Peptidoglycan synthesis</keyword>
<keyword id="KW-1185">Reference proteome</keyword>
<keyword id="KW-0808">Transferase</keyword>
<keyword id="KW-0812">Transmembrane</keyword>
<keyword id="KW-1133">Transmembrane helix</keyword>
<sequence>MSKSRLTVFSFVRRFLLRLMVVLAVFWGGGIALFSVAPVPFSAVMVERQVSAWLHGNFRYVAHSDWVSMDQISPWMGLAVIAAEDQKFPEHWGFDVASIEKALAHNERNENRIRGASTISQQTAKNLFLWDGRSWVRKGLEAGLTLGIETVWSKKRILTVYLNIAEFGDGVFGVEAAAQRYFHKPASKLTRSEAALLAAVLPNPLRFKVSSPSGYVRSRQAWILRQMYQLGGEPFMQQHQLD</sequence>
<name>MTGA_ECO24</name>
<organism>
    <name type="scientific">Escherichia coli O139:H28 (strain E24377A / ETEC)</name>
    <dbReference type="NCBI Taxonomy" id="331111"/>
    <lineage>
        <taxon>Bacteria</taxon>
        <taxon>Pseudomonadati</taxon>
        <taxon>Pseudomonadota</taxon>
        <taxon>Gammaproteobacteria</taxon>
        <taxon>Enterobacterales</taxon>
        <taxon>Enterobacteriaceae</taxon>
        <taxon>Escherichia</taxon>
    </lineage>
</organism>
<feature type="chain" id="PRO_1000062227" description="Biosynthetic peptidoglycan transglycosylase">
    <location>
        <begin position="1"/>
        <end position="242"/>
    </location>
</feature>
<feature type="transmembrane region" description="Helical" evidence="1">
    <location>
        <begin position="19"/>
        <end position="39"/>
    </location>
</feature>
<evidence type="ECO:0000255" key="1">
    <source>
        <dbReference type="HAMAP-Rule" id="MF_00766"/>
    </source>
</evidence>
<reference key="1">
    <citation type="journal article" date="2008" name="J. Bacteriol.">
        <title>The pangenome structure of Escherichia coli: comparative genomic analysis of E. coli commensal and pathogenic isolates.</title>
        <authorList>
            <person name="Rasko D.A."/>
            <person name="Rosovitz M.J."/>
            <person name="Myers G.S.A."/>
            <person name="Mongodin E.F."/>
            <person name="Fricke W.F."/>
            <person name="Gajer P."/>
            <person name="Crabtree J."/>
            <person name="Sebaihia M."/>
            <person name="Thomson N.R."/>
            <person name="Chaudhuri R."/>
            <person name="Henderson I.R."/>
            <person name="Sperandio V."/>
            <person name="Ravel J."/>
        </authorList>
    </citation>
    <scope>NUCLEOTIDE SEQUENCE [LARGE SCALE GENOMIC DNA]</scope>
    <source>
        <strain>E24377A / ETEC</strain>
    </source>
</reference>
<gene>
    <name evidence="1" type="primary">mtgA</name>
    <name type="ordered locus">EcE24377A_3695</name>
</gene>
<protein>
    <recommendedName>
        <fullName evidence="1">Biosynthetic peptidoglycan transglycosylase</fullName>
        <ecNumber evidence="1">2.4.99.28</ecNumber>
    </recommendedName>
    <alternativeName>
        <fullName evidence="1">Glycan polymerase</fullName>
    </alternativeName>
    <alternativeName>
        <fullName evidence="1">Peptidoglycan glycosyltransferase MtgA</fullName>
        <shortName evidence="1">PGT</shortName>
    </alternativeName>
</protein>
<accession>A7ZSA7</accession>
<proteinExistence type="inferred from homology"/>
<comment type="function">
    <text evidence="1">Peptidoglycan polymerase that catalyzes glycan chain elongation from lipid-linked precursors.</text>
</comment>
<comment type="catalytic activity">
    <reaction evidence="1">
        <text>[GlcNAc-(1-&gt;4)-Mur2Ac(oyl-L-Ala-gamma-D-Glu-L-Lys-D-Ala-D-Ala)](n)-di-trans,octa-cis-undecaprenyl diphosphate + beta-D-GlcNAc-(1-&gt;4)-Mur2Ac(oyl-L-Ala-gamma-D-Glu-L-Lys-D-Ala-D-Ala)-di-trans,octa-cis-undecaprenyl diphosphate = [GlcNAc-(1-&gt;4)-Mur2Ac(oyl-L-Ala-gamma-D-Glu-L-Lys-D-Ala-D-Ala)](n+1)-di-trans,octa-cis-undecaprenyl diphosphate + di-trans,octa-cis-undecaprenyl diphosphate + H(+)</text>
        <dbReference type="Rhea" id="RHEA:23708"/>
        <dbReference type="Rhea" id="RHEA-COMP:9602"/>
        <dbReference type="Rhea" id="RHEA-COMP:9603"/>
        <dbReference type="ChEBI" id="CHEBI:15378"/>
        <dbReference type="ChEBI" id="CHEBI:58405"/>
        <dbReference type="ChEBI" id="CHEBI:60033"/>
        <dbReference type="ChEBI" id="CHEBI:78435"/>
        <dbReference type="EC" id="2.4.99.28"/>
    </reaction>
</comment>
<comment type="pathway">
    <text evidence="1">Cell wall biogenesis; peptidoglycan biosynthesis.</text>
</comment>
<comment type="subcellular location">
    <subcellularLocation>
        <location evidence="1">Cell inner membrane</location>
        <topology evidence="1">Single-pass membrane protein</topology>
    </subcellularLocation>
</comment>
<comment type="similarity">
    <text evidence="1">Belongs to the glycosyltransferase 51 family.</text>
</comment>